<keyword id="KW-0032">Aminotransferase</keyword>
<keyword id="KW-0963">Cytoplasm</keyword>
<keyword id="KW-0663">Pyridoxal phosphate</keyword>
<keyword id="KW-1185">Reference proteome</keyword>
<keyword id="KW-0808">Transferase</keyword>
<feature type="chain" id="PRO_0000358868" description="Uncharacterized aminotransferase C1771.03c">
    <location>
        <begin position="1"/>
        <end position="459"/>
    </location>
</feature>
<feature type="modified residue" description="N6-(pyridoxal phosphate)lysine" evidence="1">
    <location>
        <position position="285"/>
    </location>
</feature>
<sequence length="459" mass="50497">MTETVTTTSSDKSEKKNYLFYTSPNHRPPTVVRAEGVYLYLEDGTRIMDATGGAAVACLGHGNKEVIDAMHKQSEKVCYIHSMGFSNEPADKLANLLVSEHPDVFARAYFANSGSEAVETCLKLILQYWQLVGEKQRCHIIARKQGYHGNTLFALSVGGMKPRKQPYEGVFSHTTSHVSPCFEYRYKENGETTEEYVARLAKELEDEILRVGPEKVAAFVAETVSGACTGCATPVPGYFKAMRKVCDKYGVIFYLDEVMSGIGRTGTMHAWEQEGVTPDIQSIAKCLGGGYQPISGALVGHRIMNVFEQKDAAMAGFFTYQAHPIACSAALAVQTILRRDHLVERAAEMGKYLSEKLHETFDSHPNVGNIRGRGLFWGLEIVKDKATKECFPPEYKVGSLANKIGCEHGVFVYPGMGTIDGTRGDHVLLAPPYIITREQIDELVEALSKTITSTVAALP</sequence>
<comment type="subcellular location">
    <subcellularLocation>
        <location evidence="2">Cytoplasm</location>
    </subcellularLocation>
</comment>
<comment type="similarity">
    <text evidence="3">Belongs to the class-III pyridoxal-phosphate-dependent aminotransferase family.</text>
</comment>
<reference key="1">
    <citation type="journal article" date="2002" name="Nature">
        <title>The genome sequence of Schizosaccharomyces pombe.</title>
        <authorList>
            <person name="Wood V."/>
            <person name="Gwilliam R."/>
            <person name="Rajandream M.A."/>
            <person name="Lyne M.H."/>
            <person name="Lyne R."/>
            <person name="Stewart A."/>
            <person name="Sgouros J.G."/>
            <person name="Peat N."/>
            <person name="Hayles J."/>
            <person name="Baker S.G."/>
            <person name="Basham D."/>
            <person name="Bowman S."/>
            <person name="Brooks K."/>
            <person name="Brown D."/>
            <person name="Brown S."/>
            <person name="Chillingworth T."/>
            <person name="Churcher C.M."/>
            <person name="Collins M."/>
            <person name="Connor R."/>
            <person name="Cronin A."/>
            <person name="Davis P."/>
            <person name="Feltwell T."/>
            <person name="Fraser A."/>
            <person name="Gentles S."/>
            <person name="Goble A."/>
            <person name="Hamlin N."/>
            <person name="Harris D.E."/>
            <person name="Hidalgo J."/>
            <person name="Hodgson G."/>
            <person name="Holroyd S."/>
            <person name="Hornsby T."/>
            <person name="Howarth S."/>
            <person name="Huckle E.J."/>
            <person name="Hunt S."/>
            <person name="Jagels K."/>
            <person name="James K.D."/>
            <person name="Jones L."/>
            <person name="Jones M."/>
            <person name="Leather S."/>
            <person name="McDonald S."/>
            <person name="McLean J."/>
            <person name="Mooney P."/>
            <person name="Moule S."/>
            <person name="Mungall K.L."/>
            <person name="Murphy L.D."/>
            <person name="Niblett D."/>
            <person name="Odell C."/>
            <person name="Oliver K."/>
            <person name="O'Neil S."/>
            <person name="Pearson D."/>
            <person name="Quail M.A."/>
            <person name="Rabbinowitsch E."/>
            <person name="Rutherford K.M."/>
            <person name="Rutter S."/>
            <person name="Saunders D."/>
            <person name="Seeger K."/>
            <person name="Sharp S."/>
            <person name="Skelton J."/>
            <person name="Simmonds M.N."/>
            <person name="Squares R."/>
            <person name="Squares S."/>
            <person name="Stevens K."/>
            <person name="Taylor K."/>
            <person name="Taylor R.G."/>
            <person name="Tivey A."/>
            <person name="Walsh S.V."/>
            <person name="Warren T."/>
            <person name="Whitehead S."/>
            <person name="Woodward J.R."/>
            <person name="Volckaert G."/>
            <person name="Aert R."/>
            <person name="Robben J."/>
            <person name="Grymonprez B."/>
            <person name="Weltjens I."/>
            <person name="Vanstreels E."/>
            <person name="Rieger M."/>
            <person name="Schaefer M."/>
            <person name="Mueller-Auer S."/>
            <person name="Gabel C."/>
            <person name="Fuchs M."/>
            <person name="Duesterhoeft A."/>
            <person name="Fritzc C."/>
            <person name="Holzer E."/>
            <person name="Moestl D."/>
            <person name="Hilbert H."/>
            <person name="Borzym K."/>
            <person name="Langer I."/>
            <person name="Beck A."/>
            <person name="Lehrach H."/>
            <person name="Reinhardt R."/>
            <person name="Pohl T.M."/>
            <person name="Eger P."/>
            <person name="Zimmermann W."/>
            <person name="Wedler H."/>
            <person name="Wambutt R."/>
            <person name="Purnelle B."/>
            <person name="Goffeau A."/>
            <person name="Cadieu E."/>
            <person name="Dreano S."/>
            <person name="Gloux S."/>
            <person name="Lelaure V."/>
            <person name="Mottier S."/>
            <person name="Galibert F."/>
            <person name="Aves S.J."/>
            <person name="Xiang Z."/>
            <person name="Hunt C."/>
            <person name="Moore K."/>
            <person name="Hurst S.M."/>
            <person name="Lucas M."/>
            <person name="Rochet M."/>
            <person name="Gaillardin C."/>
            <person name="Tallada V.A."/>
            <person name="Garzon A."/>
            <person name="Thode G."/>
            <person name="Daga R.R."/>
            <person name="Cruzado L."/>
            <person name="Jimenez J."/>
            <person name="Sanchez M."/>
            <person name="del Rey F."/>
            <person name="Benito J."/>
            <person name="Dominguez A."/>
            <person name="Revuelta J.L."/>
            <person name="Moreno S."/>
            <person name="Armstrong J."/>
            <person name="Forsburg S.L."/>
            <person name="Cerutti L."/>
            <person name="Lowe T."/>
            <person name="McCombie W.R."/>
            <person name="Paulsen I."/>
            <person name="Potashkin J."/>
            <person name="Shpakovski G.V."/>
            <person name="Ussery D."/>
            <person name="Barrell B.G."/>
            <person name="Nurse P."/>
        </authorList>
    </citation>
    <scope>NUCLEOTIDE SEQUENCE [LARGE SCALE GENOMIC DNA]</scope>
    <source>
        <strain>972 / ATCC 24843</strain>
    </source>
</reference>
<reference key="2">
    <citation type="journal article" date="2006" name="Nat. Biotechnol.">
        <title>ORFeome cloning and global analysis of protein localization in the fission yeast Schizosaccharomyces pombe.</title>
        <authorList>
            <person name="Matsuyama A."/>
            <person name="Arai R."/>
            <person name="Yashiroda Y."/>
            <person name="Shirai A."/>
            <person name="Kamata A."/>
            <person name="Sekido S."/>
            <person name="Kobayashi Y."/>
            <person name="Hashimoto A."/>
            <person name="Hamamoto M."/>
            <person name="Hiraoka Y."/>
            <person name="Horinouchi S."/>
            <person name="Yoshida M."/>
        </authorList>
    </citation>
    <scope>SUBCELLULAR LOCATION [LARGE SCALE ANALYSIS]</scope>
</reference>
<name>YGD3_SCHPO</name>
<gene>
    <name type="ORF">SPBC1773.03c</name>
</gene>
<accession>O94562</accession>
<dbReference type="EC" id="2.6.-.-"/>
<dbReference type="EMBL" id="CU329671">
    <property type="protein sequence ID" value="CAA21908.1"/>
    <property type="molecule type" value="Genomic_DNA"/>
</dbReference>
<dbReference type="PIR" id="T39668">
    <property type="entry name" value="T39668"/>
</dbReference>
<dbReference type="RefSeq" id="NP_595118.1">
    <property type="nucleotide sequence ID" value="NM_001021025.2"/>
</dbReference>
<dbReference type="SMR" id="O94562"/>
<dbReference type="BioGRID" id="276508">
    <property type="interactions" value="5"/>
</dbReference>
<dbReference type="FunCoup" id="O94562">
    <property type="interactions" value="9"/>
</dbReference>
<dbReference type="STRING" id="284812.O94562"/>
<dbReference type="PaxDb" id="4896-SPBC1773.03c.1"/>
<dbReference type="EnsemblFungi" id="SPBC1773.03c.1">
    <property type="protein sequence ID" value="SPBC1773.03c.1:pep"/>
    <property type="gene ID" value="SPBC1773.03c"/>
</dbReference>
<dbReference type="KEGG" id="spo:2539964"/>
<dbReference type="PomBase" id="SPBC1773.03c"/>
<dbReference type="VEuPathDB" id="FungiDB:SPBC1773.03c"/>
<dbReference type="eggNOG" id="KOG1404">
    <property type="taxonomic scope" value="Eukaryota"/>
</dbReference>
<dbReference type="HOGENOM" id="CLU_016922_4_0_1"/>
<dbReference type="InParanoid" id="O94562"/>
<dbReference type="OMA" id="FWGWQAH"/>
<dbReference type="PhylomeDB" id="O94562"/>
<dbReference type="PRO" id="PR:O94562"/>
<dbReference type="Proteomes" id="UP000002485">
    <property type="component" value="Chromosome II"/>
</dbReference>
<dbReference type="GO" id="GO:0005829">
    <property type="term" value="C:cytosol"/>
    <property type="evidence" value="ECO:0007005"/>
    <property type="project" value="PomBase"/>
</dbReference>
<dbReference type="GO" id="GO:0030170">
    <property type="term" value="F:pyridoxal phosphate binding"/>
    <property type="evidence" value="ECO:0000255"/>
    <property type="project" value="PomBase"/>
</dbReference>
<dbReference type="GO" id="GO:0008483">
    <property type="term" value="F:transaminase activity"/>
    <property type="evidence" value="ECO:0000255"/>
    <property type="project" value="PomBase"/>
</dbReference>
<dbReference type="CDD" id="cd00610">
    <property type="entry name" value="OAT_like"/>
    <property type="match status" value="1"/>
</dbReference>
<dbReference type="Gene3D" id="3.90.1150.10">
    <property type="entry name" value="Aspartate Aminotransferase, domain 1"/>
    <property type="match status" value="1"/>
</dbReference>
<dbReference type="Gene3D" id="3.40.640.10">
    <property type="entry name" value="Type I PLP-dependent aspartate aminotransferase-like (Major domain)"/>
    <property type="match status" value="1"/>
</dbReference>
<dbReference type="InterPro" id="IPR005814">
    <property type="entry name" value="Aminotrans_3"/>
</dbReference>
<dbReference type="InterPro" id="IPR015424">
    <property type="entry name" value="PyrdxlP-dep_Trfase"/>
</dbReference>
<dbReference type="InterPro" id="IPR015421">
    <property type="entry name" value="PyrdxlP-dep_Trfase_major"/>
</dbReference>
<dbReference type="InterPro" id="IPR015422">
    <property type="entry name" value="PyrdxlP-dep_Trfase_small"/>
</dbReference>
<dbReference type="NCBIfam" id="NF005685">
    <property type="entry name" value="PRK07483.1"/>
    <property type="match status" value="1"/>
</dbReference>
<dbReference type="PANTHER" id="PTHR43094">
    <property type="entry name" value="AMINOTRANSFERASE"/>
    <property type="match status" value="1"/>
</dbReference>
<dbReference type="PANTHER" id="PTHR43094:SF1">
    <property type="entry name" value="AMINOTRANSFERASE CLASS-III"/>
    <property type="match status" value="1"/>
</dbReference>
<dbReference type="Pfam" id="PF00202">
    <property type="entry name" value="Aminotran_3"/>
    <property type="match status" value="1"/>
</dbReference>
<dbReference type="SUPFAM" id="SSF53383">
    <property type="entry name" value="PLP-dependent transferases"/>
    <property type="match status" value="1"/>
</dbReference>
<evidence type="ECO:0000255" key="1"/>
<evidence type="ECO:0000269" key="2">
    <source>
    </source>
</evidence>
<evidence type="ECO:0000305" key="3"/>
<proteinExistence type="inferred from homology"/>
<organism>
    <name type="scientific">Schizosaccharomyces pombe (strain 972 / ATCC 24843)</name>
    <name type="common">Fission yeast</name>
    <dbReference type="NCBI Taxonomy" id="284812"/>
    <lineage>
        <taxon>Eukaryota</taxon>
        <taxon>Fungi</taxon>
        <taxon>Dikarya</taxon>
        <taxon>Ascomycota</taxon>
        <taxon>Taphrinomycotina</taxon>
        <taxon>Schizosaccharomycetes</taxon>
        <taxon>Schizosaccharomycetales</taxon>
        <taxon>Schizosaccharomycetaceae</taxon>
        <taxon>Schizosaccharomyces</taxon>
    </lineage>
</organism>
<protein>
    <recommendedName>
        <fullName>Uncharacterized aminotransferase C1771.03c</fullName>
        <ecNumber>2.6.-.-</ecNumber>
    </recommendedName>
</protein>